<accession>A4WJG1</accession>
<evidence type="ECO:0000255" key="1">
    <source>
        <dbReference type="HAMAP-Rule" id="MF_01123"/>
    </source>
</evidence>
<feature type="chain" id="PRO_1000065307" description="Acetyl-coenzyme A synthetase">
    <location>
        <begin position="1"/>
        <end position="670"/>
    </location>
</feature>
<feature type="binding site" evidence="1">
    <location>
        <begin position="205"/>
        <end position="208"/>
    </location>
    <ligand>
        <name>CoA</name>
        <dbReference type="ChEBI" id="CHEBI:57287"/>
    </ligand>
</feature>
<feature type="binding site" evidence="1">
    <location>
        <position position="326"/>
    </location>
    <ligand>
        <name>CoA</name>
        <dbReference type="ChEBI" id="CHEBI:57287"/>
    </ligand>
</feature>
<feature type="binding site" evidence="1">
    <location>
        <begin position="402"/>
        <end position="404"/>
    </location>
    <ligand>
        <name>ATP</name>
        <dbReference type="ChEBI" id="CHEBI:30616"/>
    </ligand>
</feature>
<feature type="binding site" evidence="1">
    <location>
        <begin position="426"/>
        <end position="431"/>
    </location>
    <ligand>
        <name>ATP</name>
        <dbReference type="ChEBI" id="CHEBI:30616"/>
    </ligand>
</feature>
<feature type="binding site" evidence="1">
    <location>
        <position position="517"/>
    </location>
    <ligand>
        <name>ATP</name>
        <dbReference type="ChEBI" id="CHEBI:30616"/>
    </ligand>
</feature>
<feature type="binding site" evidence="1">
    <location>
        <position position="532"/>
    </location>
    <ligand>
        <name>ATP</name>
        <dbReference type="ChEBI" id="CHEBI:30616"/>
    </ligand>
</feature>
<feature type="binding site" evidence="1">
    <location>
        <position position="543"/>
    </location>
    <ligand>
        <name>ATP</name>
        <dbReference type="ChEBI" id="CHEBI:30616"/>
    </ligand>
</feature>
<feature type="binding site" evidence="1">
    <location>
        <position position="554"/>
    </location>
    <ligand>
        <name>Mg(2+)</name>
        <dbReference type="ChEBI" id="CHEBI:18420"/>
    </ligand>
</feature>
<feature type="binding site" evidence="1">
    <location>
        <position position="556"/>
    </location>
    <ligand>
        <name>Mg(2+)</name>
        <dbReference type="ChEBI" id="CHEBI:18420"/>
    </ligand>
</feature>
<feature type="binding site" evidence="1">
    <location>
        <position position="559"/>
    </location>
    <ligand>
        <name>Mg(2+)</name>
        <dbReference type="ChEBI" id="CHEBI:18420"/>
    </ligand>
</feature>
<feature type="binding site" evidence="1">
    <location>
        <position position="601"/>
    </location>
    <ligand>
        <name>CoA</name>
        <dbReference type="ChEBI" id="CHEBI:57287"/>
    </ligand>
</feature>
<feature type="modified residue" description="N6-acetyllysine" evidence="1">
    <location>
        <position position="626"/>
    </location>
</feature>
<dbReference type="EC" id="6.2.1.1" evidence="1"/>
<dbReference type="EMBL" id="CP000660">
    <property type="protein sequence ID" value="ABP50528.1"/>
    <property type="molecule type" value="Genomic_DNA"/>
</dbReference>
<dbReference type="RefSeq" id="WP_011900435.1">
    <property type="nucleotide sequence ID" value="NC_009376.1"/>
</dbReference>
<dbReference type="SMR" id="A4WJG1"/>
<dbReference type="STRING" id="340102.Pars_0948"/>
<dbReference type="GeneID" id="5055098"/>
<dbReference type="KEGG" id="pas:Pars_0948"/>
<dbReference type="HOGENOM" id="CLU_000022_3_6_2"/>
<dbReference type="OrthoDB" id="371752at2157"/>
<dbReference type="PhylomeDB" id="A4WJG1"/>
<dbReference type="Proteomes" id="UP000001567">
    <property type="component" value="Chromosome"/>
</dbReference>
<dbReference type="GO" id="GO:0003987">
    <property type="term" value="F:acetate-CoA ligase activity"/>
    <property type="evidence" value="ECO:0007669"/>
    <property type="project" value="UniProtKB-UniRule"/>
</dbReference>
<dbReference type="GO" id="GO:0016208">
    <property type="term" value="F:AMP binding"/>
    <property type="evidence" value="ECO:0007669"/>
    <property type="project" value="InterPro"/>
</dbReference>
<dbReference type="GO" id="GO:0005524">
    <property type="term" value="F:ATP binding"/>
    <property type="evidence" value="ECO:0007669"/>
    <property type="project" value="UniProtKB-KW"/>
</dbReference>
<dbReference type="GO" id="GO:0046872">
    <property type="term" value="F:metal ion binding"/>
    <property type="evidence" value="ECO:0007669"/>
    <property type="project" value="UniProtKB-KW"/>
</dbReference>
<dbReference type="GO" id="GO:0019427">
    <property type="term" value="P:acetyl-CoA biosynthetic process from acetate"/>
    <property type="evidence" value="ECO:0007669"/>
    <property type="project" value="InterPro"/>
</dbReference>
<dbReference type="CDD" id="cd05966">
    <property type="entry name" value="ACS"/>
    <property type="match status" value="1"/>
</dbReference>
<dbReference type="FunFam" id="3.40.50.12780:FF:000001">
    <property type="entry name" value="Acetyl-coenzyme A synthetase"/>
    <property type="match status" value="1"/>
</dbReference>
<dbReference type="Gene3D" id="3.30.300.30">
    <property type="match status" value="1"/>
</dbReference>
<dbReference type="Gene3D" id="3.40.50.12780">
    <property type="entry name" value="N-terminal domain of ligase-like"/>
    <property type="match status" value="1"/>
</dbReference>
<dbReference type="HAMAP" id="MF_01123">
    <property type="entry name" value="Ac_CoA_synth"/>
    <property type="match status" value="1"/>
</dbReference>
<dbReference type="InterPro" id="IPR011904">
    <property type="entry name" value="Ac_CoA_lig"/>
</dbReference>
<dbReference type="InterPro" id="IPR032387">
    <property type="entry name" value="ACAS_N"/>
</dbReference>
<dbReference type="InterPro" id="IPR025110">
    <property type="entry name" value="AMP-bd_C"/>
</dbReference>
<dbReference type="InterPro" id="IPR045851">
    <property type="entry name" value="AMP-bd_C_sf"/>
</dbReference>
<dbReference type="InterPro" id="IPR020845">
    <property type="entry name" value="AMP-binding_CS"/>
</dbReference>
<dbReference type="InterPro" id="IPR000873">
    <property type="entry name" value="AMP-dep_synth/lig_dom"/>
</dbReference>
<dbReference type="InterPro" id="IPR042099">
    <property type="entry name" value="ANL_N_sf"/>
</dbReference>
<dbReference type="NCBIfam" id="TIGR02188">
    <property type="entry name" value="Ac_CoA_lig_AcsA"/>
    <property type="match status" value="1"/>
</dbReference>
<dbReference type="NCBIfam" id="NF001208">
    <property type="entry name" value="PRK00174.1"/>
    <property type="match status" value="1"/>
</dbReference>
<dbReference type="PANTHER" id="PTHR24095">
    <property type="entry name" value="ACETYL-COENZYME A SYNTHETASE"/>
    <property type="match status" value="1"/>
</dbReference>
<dbReference type="PANTHER" id="PTHR24095:SF232">
    <property type="entry name" value="ACETYL-COENZYME A SYNTHETASE"/>
    <property type="match status" value="1"/>
</dbReference>
<dbReference type="Pfam" id="PF16177">
    <property type="entry name" value="ACAS_N"/>
    <property type="match status" value="1"/>
</dbReference>
<dbReference type="Pfam" id="PF00501">
    <property type="entry name" value="AMP-binding"/>
    <property type="match status" value="1"/>
</dbReference>
<dbReference type="Pfam" id="PF13193">
    <property type="entry name" value="AMP-binding_C"/>
    <property type="match status" value="1"/>
</dbReference>
<dbReference type="SUPFAM" id="SSF56801">
    <property type="entry name" value="Acetyl-CoA synthetase-like"/>
    <property type="match status" value="1"/>
</dbReference>
<dbReference type="PROSITE" id="PS00455">
    <property type="entry name" value="AMP_BINDING"/>
    <property type="match status" value="1"/>
</dbReference>
<proteinExistence type="inferred from homology"/>
<organism>
    <name type="scientific">Pyrobaculum arsenaticum (strain DSM 13514 / JCM 11321 / PZ6)</name>
    <dbReference type="NCBI Taxonomy" id="340102"/>
    <lineage>
        <taxon>Archaea</taxon>
        <taxon>Thermoproteota</taxon>
        <taxon>Thermoprotei</taxon>
        <taxon>Thermoproteales</taxon>
        <taxon>Thermoproteaceae</taxon>
        <taxon>Pyrobaculum</taxon>
    </lineage>
</organism>
<protein>
    <recommendedName>
        <fullName evidence="1">Acetyl-coenzyme A synthetase</fullName>
        <shortName evidence="1">AcCoA synthetase</shortName>
        <shortName evidence="1">Acs</shortName>
        <ecNumber evidence="1">6.2.1.1</ecNumber>
    </recommendedName>
    <alternativeName>
        <fullName evidence="1">Acetate--CoA ligase</fullName>
    </alternativeName>
    <alternativeName>
        <fullName evidence="1">Acyl-activating enzyme</fullName>
    </alternativeName>
</protein>
<name>ACSA_PYRAR</name>
<keyword id="KW-0007">Acetylation</keyword>
<keyword id="KW-0067">ATP-binding</keyword>
<keyword id="KW-0436">Ligase</keyword>
<keyword id="KW-0460">Magnesium</keyword>
<keyword id="KW-0479">Metal-binding</keyword>
<keyword id="KW-0547">Nucleotide-binding</keyword>
<comment type="function">
    <text evidence="1">Catalyzes the conversion of acetate into acetyl-CoA (AcCoA), an essential intermediate at the junction of anabolic and catabolic pathways. AcsA undergoes a two-step reaction. In the first half reaction, AcsA combines acetate with ATP to form acetyl-adenylate (AcAMP) intermediate. In the second half reaction, it can then transfer the acetyl group from AcAMP to the sulfhydryl group of CoA, forming the product AcCoA.</text>
</comment>
<comment type="catalytic activity">
    <reaction evidence="1">
        <text>acetate + ATP + CoA = acetyl-CoA + AMP + diphosphate</text>
        <dbReference type="Rhea" id="RHEA:23176"/>
        <dbReference type="ChEBI" id="CHEBI:30089"/>
        <dbReference type="ChEBI" id="CHEBI:30616"/>
        <dbReference type="ChEBI" id="CHEBI:33019"/>
        <dbReference type="ChEBI" id="CHEBI:57287"/>
        <dbReference type="ChEBI" id="CHEBI:57288"/>
        <dbReference type="ChEBI" id="CHEBI:456215"/>
        <dbReference type="EC" id="6.2.1.1"/>
    </reaction>
</comment>
<comment type="cofactor">
    <cofactor evidence="1">
        <name>Mg(2+)</name>
        <dbReference type="ChEBI" id="CHEBI:18420"/>
    </cofactor>
</comment>
<comment type="PTM">
    <text evidence="1">Acetylated. Deacetylation by the SIR2-homolog deacetylase activates the enzyme.</text>
</comment>
<comment type="similarity">
    <text evidence="1">Belongs to the ATP-dependent AMP-binding enzyme family.</text>
</comment>
<reference key="1">
    <citation type="submission" date="2007-04" db="EMBL/GenBank/DDBJ databases">
        <title>Complete sequence of Pyrobaculum arsenaticum DSM 13514.</title>
        <authorList>
            <consortium name="US DOE Joint Genome Institute"/>
            <person name="Copeland A."/>
            <person name="Lucas S."/>
            <person name="Lapidus A."/>
            <person name="Barry K."/>
            <person name="Glavina del Rio T."/>
            <person name="Dalin E."/>
            <person name="Tice H."/>
            <person name="Pitluck S."/>
            <person name="Chain P."/>
            <person name="Malfatti S."/>
            <person name="Shin M."/>
            <person name="Vergez L."/>
            <person name="Schmutz J."/>
            <person name="Larimer F."/>
            <person name="Land M."/>
            <person name="Hauser L."/>
            <person name="Kyrpides N."/>
            <person name="Mikhailova N."/>
            <person name="Cozen A.E."/>
            <person name="Fitz-Gibbon S.T."/>
            <person name="House C.H."/>
            <person name="Saltikov C."/>
            <person name="Lowe T.M."/>
            <person name="Richardson P."/>
        </authorList>
    </citation>
    <scope>NUCLEOTIDE SEQUENCE [LARGE SCALE GENOMIC DNA]</scope>
    <source>
        <strain>ATCC 700994 / DSM 13514 / JCM 11321 / PZ6</strain>
    </source>
</reference>
<sequence length="670" mass="75997">MSLKSLEKETELPFDEYVLNDKWRHKYTPIDTYFKFHQQAIENLESFWESVAKELEWFKPWDKVLDASNPPFYKWFVGGRLNLSYLAVDRHVKTWRKNKLAIEWEGEPLDESGYPIDRRKLTYYDLFREVNRVACMLKCNFGVKKGDRVTLYLPMVPELPITMLAAWRIGAITNVVFSGFSADALAERINDSQSRIVITADGFWRRGKVVRLKEVVDSALEKAPGVENVIVLPRLGLKDVPMTEGRDFWWNRLMQGIPPNTYIEPEPVESEHPSFILYTSGTTGKPKGIVHDTGGWAVHVYATMKWVFDIRDDDIYWCTADIGWVTGHSYVVLGPLLMGTTEIIYEGAPDYPQPDRWWSIIERYGVTILYTSPTAIRMFMRYGEAWPGKHDLSTLRIIHSVGEPINPEAWRWAYRVLGNEKVAFGSTWWMTETGGIVISHAPGLYLVPMKPGTNGPPLPGFEVDVVDENGNPVPPGVKGYLVIKKPWPGMLHGIWGDPERYVKTYWSRFPGMFYVGDYAIKDKDGYIWVLGRADEVIKVAGHRLGTYELESAFVAHPAVAEAAVVGVPDAIKGEVPIAFVVLKQGVTPTEELRKELREHIRKSIGPIAEPAQIFFVTKLPKTRSGKIMRRLLKAVATGAPLGDVTTLEDETSVEEAKKAYEELKAEMAGP</sequence>
<gene>
    <name evidence="1" type="primary">acsA</name>
    <name type="ordered locus">Pars_0948</name>
</gene>